<name>TIP39_MOUSE</name>
<gene>
    <name type="primary">Pth2</name>
    <name type="synonym">Tip39</name>
    <name type="synonym">Tipf39</name>
</gene>
<keyword id="KW-0165">Cleavage on pair of basic residues</keyword>
<keyword id="KW-0527">Neuropeptide</keyword>
<keyword id="KW-1185">Reference proteome</keyword>
<keyword id="KW-0964">Secreted</keyword>
<keyword id="KW-0732">Signal</keyword>
<comment type="function">
    <text evidence="3 4 5">Plays a role as a potent and selective agonist of PTH2R resulting in adenyl cyclase activation and intracellular calcium levels elevation. Induces protein kinase C beta activation, recruitment of beta-arrestin and PTH2R internalization. May inhibit cell proliferation via its action of PTH2R activation. Neuropeptide which may also have a role in spermatogenesis. May activate nociceptors and nociceptive circuits.</text>
</comment>
<comment type="subunit">
    <text>Ligand of high affinity for the PTH2 receptor (PTH2R).</text>
</comment>
<comment type="subcellular location">
    <subcellularLocation>
        <location>Secreted</location>
    </subcellularLocation>
</comment>
<comment type="tissue specificity">
    <text evidence="3 4 6">Expressed in testis and, less abundantly, in liver and kidney. Expressed in seminiferous tubuli and several brain regions, including nucleus ruber, caudal paralemniscal nucleus, nucleus centralis pontis, and nucleus subparafascicularis thalami. Expressed in neurons of cerebral cortex and subcortical areas. Expressed in Purkinje cells of cerebellum.</text>
</comment>
<comment type="miscellaneous">
    <text>The N-terminal truncation of tuberoinfundibular peptide of 39 residues [TIP39(7-39)] reverses PTH2R/PTHR1 binding selectivity, then is a highly potent and selective antagonist for PTHR1.</text>
</comment>
<comment type="similarity">
    <text evidence="7">Belongs to the parathyroid hormone family.</text>
</comment>
<dbReference type="EMBL" id="AF399674">
    <property type="protein sequence ID" value="AAK84862.1"/>
    <property type="molecule type" value="mRNA"/>
</dbReference>
<dbReference type="EMBL" id="AY048587">
    <property type="protein sequence ID" value="AAL06596.1"/>
    <property type="molecule type" value="mRNA"/>
</dbReference>
<dbReference type="CCDS" id="CCDS21233.1"/>
<dbReference type="RefSeq" id="NP_444486.1">
    <property type="nucleotide sequence ID" value="NM_053256.2"/>
</dbReference>
<dbReference type="RefSeq" id="XP_006540625.1">
    <property type="nucleotide sequence ID" value="XM_006540562.1"/>
</dbReference>
<dbReference type="RefSeq" id="XP_006540626.1">
    <property type="nucleotide sequence ID" value="XM_006540563.2"/>
</dbReference>
<dbReference type="RefSeq" id="XP_006540627.1">
    <property type="nucleotide sequence ID" value="XM_006540564.3"/>
</dbReference>
<dbReference type="RefSeq" id="XP_006540628.1">
    <property type="nucleotide sequence ID" value="XM_006540565.5"/>
</dbReference>
<dbReference type="RefSeq" id="XP_017177420.1">
    <property type="nucleotide sequence ID" value="XM_017321931.1"/>
</dbReference>
<dbReference type="RefSeq" id="XP_030097856.1">
    <property type="nucleotide sequence ID" value="XM_030241996.2"/>
</dbReference>
<dbReference type="SMR" id="Q91W27"/>
<dbReference type="FunCoup" id="Q91W27">
    <property type="interactions" value="377"/>
</dbReference>
<dbReference type="STRING" id="10090.ENSMUSP00000041047"/>
<dbReference type="PhosphoSitePlus" id="Q91W27"/>
<dbReference type="PaxDb" id="10090-ENSMUSP00000041047"/>
<dbReference type="Antibodypedia" id="31997">
    <property type="antibodies" value="37 antibodies from 12 providers"/>
</dbReference>
<dbReference type="DNASU" id="114640"/>
<dbReference type="Ensembl" id="ENSMUST00000042754.7">
    <property type="protein sequence ID" value="ENSMUSP00000041047.6"/>
    <property type="gene ID" value="ENSMUSG00000038300.7"/>
</dbReference>
<dbReference type="GeneID" id="114640"/>
<dbReference type="KEGG" id="mmu:114640"/>
<dbReference type="UCSC" id="uc009gtz.1">
    <property type="organism name" value="mouse"/>
</dbReference>
<dbReference type="AGR" id="MGI:2152297"/>
<dbReference type="CTD" id="113091"/>
<dbReference type="MGI" id="MGI:2152297">
    <property type="gene designation" value="Pth2"/>
</dbReference>
<dbReference type="VEuPathDB" id="HostDB:ENSMUSG00000038300"/>
<dbReference type="eggNOG" id="ENOG502S3PJ">
    <property type="taxonomic scope" value="Eukaryota"/>
</dbReference>
<dbReference type="GeneTree" id="ENSGT00410000026259"/>
<dbReference type="HOGENOM" id="CLU_2319483_0_0_1"/>
<dbReference type="InParanoid" id="Q91W27"/>
<dbReference type="OrthoDB" id="9538741at2759"/>
<dbReference type="PhylomeDB" id="Q91W27"/>
<dbReference type="TreeFam" id="TF353520"/>
<dbReference type="Reactome" id="R-MMU-373080">
    <property type="pathway name" value="Class B/2 (Secretin family receptors)"/>
</dbReference>
<dbReference type="Reactome" id="R-MMU-418555">
    <property type="pathway name" value="G alpha (s) signalling events"/>
</dbReference>
<dbReference type="BioGRID-ORCS" id="114640">
    <property type="hits" value="2 hits in 78 CRISPR screens"/>
</dbReference>
<dbReference type="ChiTaRS" id="Tfip11">
    <property type="organism name" value="mouse"/>
</dbReference>
<dbReference type="PRO" id="PR:Q91W27"/>
<dbReference type="Proteomes" id="UP000000589">
    <property type="component" value="Chromosome 7"/>
</dbReference>
<dbReference type="RNAct" id="Q91W27">
    <property type="molecule type" value="protein"/>
</dbReference>
<dbReference type="Bgee" id="ENSMUSG00000038300">
    <property type="expression patterns" value="Expressed in olfactory epithelium and 26 other cell types or tissues"/>
</dbReference>
<dbReference type="ExpressionAtlas" id="Q91W27">
    <property type="expression patterns" value="baseline and differential"/>
</dbReference>
<dbReference type="GO" id="GO:0005576">
    <property type="term" value="C:extracellular region"/>
    <property type="evidence" value="ECO:0007669"/>
    <property type="project" value="UniProtKB-SubCell"/>
</dbReference>
<dbReference type="GO" id="GO:0005102">
    <property type="term" value="F:signaling receptor binding"/>
    <property type="evidence" value="ECO:0000304"/>
    <property type="project" value="MGI"/>
</dbReference>
<dbReference type="GO" id="GO:0006171">
    <property type="term" value="P:cAMP biosynthetic process"/>
    <property type="evidence" value="ECO:0000304"/>
    <property type="project" value="MGI"/>
</dbReference>
<dbReference type="GO" id="GO:0007218">
    <property type="term" value="P:neuropeptide signaling pathway"/>
    <property type="evidence" value="ECO:0007669"/>
    <property type="project" value="UniProtKB-KW"/>
</dbReference>
<dbReference type="InterPro" id="IPR029396">
    <property type="entry name" value="TIP39"/>
</dbReference>
<dbReference type="PANTHER" id="PTHR28585">
    <property type="entry name" value="TUBEROINFUNDIBULAR PEPTIDE OF 39 RESIDUES"/>
    <property type="match status" value="1"/>
</dbReference>
<dbReference type="PANTHER" id="PTHR28585:SF1">
    <property type="entry name" value="TUBEROINFUNDIBULAR PEPTIDE OF 39 RESIDUES"/>
    <property type="match status" value="1"/>
</dbReference>
<dbReference type="Pfam" id="PF14980">
    <property type="entry name" value="TIP39"/>
    <property type="match status" value="1"/>
</dbReference>
<evidence type="ECO:0000250" key="1"/>
<evidence type="ECO:0000255" key="2"/>
<evidence type="ECO:0000269" key="3">
    <source>
    </source>
</evidence>
<evidence type="ECO:0000269" key="4">
    <source>
    </source>
</evidence>
<evidence type="ECO:0000269" key="5">
    <source>
    </source>
</evidence>
<evidence type="ECO:0000269" key="6">
    <source>
    </source>
</evidence>
<evidence type="ECO:0000305" key="7"/>
<feature type="signal peptide" evidence="2">
    <location>
        <begin position="1"/>
        <end position="30"/>
    </location>
</feature>
<feature type="propeptide" id="PRO_0000045944" evidence="1">
    <location>
        <begin position="31"/>
        <end position="59"/>
    </location>
</feature>
<feature type="peptide" id="PRO_0000045945" description="Tuberoinfundibular peptide of 39 residues">
    <location>
        <begin position="62"/>
        <end position="100"/>
    </location>
</feature>
<feature type="sequence conflict" description="In Ref. 3." evidence="7" ref="3">
    <original>Q</original>
    <variation>H</variation>
    <location>
        <position position="92"/>
    </location>
</feature>
<organism>
    <name type="scientific">Mus musculus</name>
    <name type="common">Mouse</name>
    <dbReference type="NCBI Taxonomy" id="10090"/>
    <lineage>
        <taxon>Eukaryota</taxon>
        <taxon>Metazoa</taxon>
        <taxon>Chordata</taxon>
        <taxon>Craniata</taxon>
        <taxon>Vertebrata</taxon>
        <taxon>Euteleostomi</taxon>
        <taxon>Mammalia</taxon>
        <taxon>Eutheria</taxon>
        <taxon>Euarchontoglires</taxon>
        <taxon>Glires</taxon>
        <taxon>Rodentia</taxon>
        <taxon>Myomorpha</taxon>
        <taxon>Muroidea</taxon>
        <taxon>Muridae</taxon>
        <taxon>Murinae</taxon>
        <taxon>Mus</taxon>
        <taxon>Mus</taxon>
    </lineage>
</organism>
<reference key="1">
    <citation type="journal article" date="2002" name="J. Endocrinol.">
        <title>Characterization of the human and mouse genes encoding the tuberoinfundibular peptide of 39 residues, a ligand of the parathyroid hormone receptor family.</title>
        <authorList>
            <person name="Hansen I.A."/>
            <person name="Jakob O."/>
            <person name="Wortmann S."/>
            <person name="Arzberger T."/>
            <person name="Allolio B."/>
            <person name="Blind E."/>
        </authorList>
    </citation>
    <scope>NUCLEOTIDE SEQUENCE [MRNA]</scope>
    <scope>TISSUE SPECIFICITY</scope>
    <source>
        <tissue>Brain</tissue>
    </source>
</reference>
<reference key="2">
    <citation type="journal article" date="2002" name="Proc. Natl. Acad. Sci. U.S.A.">
        <title>Anatomical and physiological evidence for involvement of tuberoinfundibular peptide of 39 residues in nociception.</title>
        <authorList>
            <person name="Dobolyi A."/>
            <person name="Ueda H."/>
            <person name="Uchida H."/>
            <person name="Palkovits M."/>
            <person name="Usdin T.B."/>
        </authorList>
    </citation>
    <scope>NUCLEOTIDE SEQUENCE [MRNA]</scope>
    <scope>TISSUE SPECIFICITY</scope>
    <scope>FUNCTION</scope>
</reference>
<reference key="3">
    <citation type="journal article" date="2003" name="Neuropharmacology">
        <title>Tuberoinfundibular peptide of 39 residues (TIP39): molecular structure and activity for parathyroid hormone 2 receptor.</title>
        <authorList>
            <person name="Della Penna K."/>
            <person name="Kinose F."/>
            <person name="Sun H."/>
            <person name="Koblan K.S."/>
            <person name="Wang H."/>
        </authorList>
    </citation>
    <scope>NUCLEOTIDE SEQUENCE [MRNA]</scope>
</reference>
<reference key="4">
    <citation type="journal article" date="2002" name="Endocrinology">
        <title>Identification and characterization of the murine and human gene encoding the tuberoinfundibular peptide of 39 residues.</title>
        <authorList>
            <person name="John M.R."/>
            <person name="Arai M."/>
            <person name="Rubin D.A."/>
            <person name="Jonsson K.B."/>
            <person name="Jueppner H."/>
        </authorList>
    </citation>
    <scope>NUCLEOTIDE SEQUENCE [MRNA] OF 1-90</scope>
    <scope>FUNCTION</scope>
    <scope>INTERACTION WITH PTH2R</scope>
    <scope>TISSUE SPECIFICITY</scope>
    <source>
        <strain>Swiss Webster</strain>
        <tissue>Brain</tissue>
    </source>
</reference>
<reference key="5">
    <citation type="journal article" date="2002" name="Peptides">
        <title>Specificity and stability of a new PTH1 receptor antagonist, mouse TIP(7-39).</title>
        <authorList>
            <person name="Hoare S.R.J."/>
            <person name="Usdin T.B."/>
        </authorList>
    </citation>
    <scope>FUNCTION OF TRUNCATED PEPTIDE</scope>
</reference>
<sequence length="100" mass="11022">METCQMSRSPRERLLLLLLLLLLVPWGTGPASGVALPLAGVFSLRAPGRAWAGLGSPLSRRSLALADDAAFRERARLLAALERRRWLDSYMQKLLLLDAP</sequence>
<accession>Q91W27</accession>
<accession>Q91ZA0</accession>
<protein>
    <recommendedName>
        <fullName>Tuberoinfundibular peptide of 39 residues</fullName>
        <shortName>TIP39</shortName>
    </recommendedName>
    <alternativeName>
        <fullName>Parathyroid hormone 2</fullName>
    </alternativeName>
</protein>
<proteinExistence type="evidence at protein level"/>